<gene>
    <name type="primary">MPK5</name>
    <name type="ordered locus">At4g11330</name>
    <name type="ORF">F8L21.120</name>
</gene>
<evidence type="ECO:0000250" key="1"/>
<evidence type="ECO:0000250" key="2">
    <source>
        <dbReference type="UniProtKB" id="Q39026"/>
    </source>
</evidence>
<evidence type="ECO:0000255" key="3">
    <source>
        <dbReference type="PROSITE-ProRule" id="PRU00159"/>
    </source>
</evidence>
<evidence type="ECO:0000255" key="4">
    <source>
        <dbReference type="PROSITE-ProRule" id="PRU10027"/>
    </source>
</evidence>
<evidence type="ECO:0000269" key="5">
    <source>
    </source>
</evidence>
<evidence type="ECO:0000269" key="6">
    <source>
    </source>
</evidence>
<evidence type="ECO:0000305" key="7"/>
<dbReference type="EC" id="2.7.11.24"/>
<dbReference type="EMBL" id="D21841">
    <property type="protein sequence ID" value="BAA04868.1"/>
    <property type="molecule type" value="mRNA"/>
</dbReference>
<dbReference type="EMBL" id="AL096882">
    <property type="protein sequence ID" value="CAB51417.1"/>
    <property type="status" value="ALT_SEQ"/>
    <property type="molecule type" value="Genomic_DNA"/>
</dbReference>
<dbReference type="EMBL" id="AL161531">
    <property type="protein sequence ID" value="CAB81234.1"/>
    <property type="status" value="ALT_SEQ"/>
    <property type="molecule type" value="Genomic_DNA"/>
</dbReference>
<dbReference type="EMBL" id="CP002687">
    <property type="protein sequence ID" value="AEE82997.1"/>
    <property type="molecule type" value="Genomic_DNA"/>
</dbReference>
<dbReference type="EMBL" id="AK176361">
    <property type="protein sequence ID" value="BAD44124.1"/>
    <property type="molecule type" value="mRNA"/>
</dbReference>
<dbReference type="PIR" id="S40471">
    <property type="entry name" value="S40471"/>
</dbReference>
<dbReference type="PIR" id="T13024">
    <property type="entry name" value="T13024"/>
</dbReference>
<dbReference type="RefSeq" id="NP_567378.4">
    <property type="nucleotide sequence ID" value="NM_117204.7"/>
</dbReference>
<dbReference type="SMR" id="Q39025"/>
<dbReference type="BioGRID" id="12034">
    <property type="interactions" value="147"/>
</dbReference>
<dbReference type="FunCoup" id="Q39025">
    <property type="interactions" value="2175"/>
</dbReference>
<dbReference type="IntAct" id="Q39025">
    <property type="interactions" value="1"/>
</dbReference>
<dbReference type="STRING" id="3702.Q39025"/>
<dbReference type="PaxDb" id="3702-AT4G11330.1"/>
<dbReference type="ProteomicsDB" id="250947"/>
<dbReference type="EnsemblPlants" id="AT4G11330.1">
    <property type="protein sequence ID" value="AT4G11330.1"/>
    <property type="gene ID" value="AT4G11330"/>
</dbReference>
<dbReference type="GeneID" id="826735"/>
<dbReference type="Gramene" id="AT4G11330.1">
    <property type="protein sequence ID" value="AT4G11330.1"/>
    <property type="gene ID" value="AT4G11330"/>
</dbReference>
<dbReference type="KEGG" id="ath:AT4G11330"/>
<dbReference type="Araport" id="AT4G11330"/>
<dbReference type="TAIR" id="AT4G11330">
    <property type="gene designation" value="MPK5"/>
</dbReference>
<dbReference type="eggNOG" id="KOG0660">
    <property type="taxonomic scope" value="Eukaryota"/>
</dbReference>
<dbReference type="HOGENOM" id="CLU_000288_181_1_1"/>
<dbReference type="InParanoid" id="Q39025"/>
<dbReference type="OMA" id="ETEYMTE"/>
<dbReference type="PhylomeDB" id="Q39025"/>
<dbReference type="BRENDA" id="2.7.11.24">
    <property type="organism ID" value="399"/>
</dbReference>
<dbReference type="PRO" id="PR:Q39025"/>
<dbReference type="Proteomes" id="UP000006548">
    <property type="component" value="Chromosome 4"/>
</dbReference>
<dbReference type="ExpressionAtlas" id="Q39025">
    <property type="expression patterns" value="baseline and differential"/>
</dbReference>
<dbReference type="GO" id="GO:0005524">
    <property type="term" value="F:ATP binding"/>
    <property type="evidence" value="ECO:0007669"/>
    <property type="project" value="UniProtKB-KW"/>
</dbReference>
<dbReference type="GO" id="GO:0004707">
    <property type="term" value="F:MAP kinase activity"/>
    <property type="evidence" value="ECO:0000250"/>
    <property type="project" value="TAIR"/>
</dbReference>
<dbReference type="GO" id="GO:0106310">
    <property type="term" value="F:protein serine kinase activity"/>
    <property type="evidence" value="ECO:0007669"/>
    <property type="project" value="RHEA"/>
</dbReference>
<dbReference type="FunFam" id="1.10.510.10:FF:000013">
    <property type="entry name" value="Mitogen-activated protein kinase"/>
    <property type="match status" value="1"/>
</dbReference>
<dbReference type="FunFam" id="3.30.200.20:FF:000046">
    <property type="entry name" value="Mitogen-activated protein kinase"/>
    <property type="match status" value="1"/>
</dbReference>
<dbReference type="Gene3D" id="3.30.200.20">
    <property type="entry name" value="Phosphorylase Kinase, domain 1"/>
    <property type="match status" value="1"/>
</dbReference>
<dbReference type="Gene3D" id="1.10.510.10">
    <property type="entry name" value="Transferase(Phosphotransferase) domain 1"/>
    <property type="match status" value="1"/>
</dbReference>
<dbReference type="InterPro" id="IPR011009">
    <property type="entry name" value="Kinase-like_dom_sf"/>
</dbReference>
<dbReference type="InterPro" id="IPR050117">
    <property type="entry name" value="MAP_kinase"/>
</dbReference>
<dbReference type="InterPro" id="IPR003527">
    <property type="entry name" value="MAP_kinase_CS"/>
</dbReference>
<dbReference type="InterPro" id="IPR000719">
    <property type="entry name" value="Prot_kinase_dom"/>
</dbReference>
<dbReference type="InterPro" id="IPR017441">
    <property type="entry name" value="Protein_kinase_ATP_BS"/>
</dbReference>
<dbReference type="InterPro" id="IPR008271">
    <property type="entry name" value="Ser/Thr_kinase_AS"/>
</dbReference>
<dbReference type="PANTHER" id="PTHR24055">
    <property type="entry name" value="MITOGEN-ACTIVATED PROTEIN KINASE"/>
    <property type="match status" value="1"/>
</dbReference>
<dbReference type="Pfam" id="PF00069">
    <property type="entry name" value="Pkinase"/>
    <property type="match status" value="1"/>
</dbReference>
<dbReference type="SMART" id="SM00220">
    <property type="entry name" value="S_TKc"/>
    <property type="match status" value="1"/>
</dbReference>
<dbReference type="SUPFAM" id="SSF56112">
    <property type="entry name" value="Protein kinase-like (PK-like)"/>
    <property type="match status" value="1"/>
</dbReference>
<dbReference type="PROSITE" id="PS01351">
    <property type="entry name" value="MAPK"/>
    <property type="match status" value="1"/>
</dbReference>
<dbReference type="PROSITE" id="PS00107">
    <property type="entry name" value="PROTEIN_KINASE_ATP"/>
    <property type="match status" value="1"/>
</dbReference>
<dbReference type="PROSITE" id="PS50011">
    <property type="entry name" value="PROTEIN_KINASE_DOM"/>
    <property type="match status" value="1"/>
</dbReference>
<dbReference type="PROSITE" id="PS00108">
    <property type="entry name" value="PROTEIN_KINASE_ST"/>
    <property type="match status" value="1"/>
</dbReference>
<accession>Q39025</accession>
<accession>Q67YV7</accession>
<accession>Q9SUS8</accession>
<sequence>MAKEIESATDLGDTNIKGVLVHGGRYFQYNVYGNLFEVSNKYVPPIRPIGRGAYGFVCAAVDSETHEEIAIKKIGKAFDNKVDAKRTLREIKLLRHLEHENVVVIKDIIRPPKKEDFVDVYIVFELMDTDLHQIIRSNQSLNDDHCQYFLYQILRGLKYIHSANVLHRDLKPSNLLLNSNCDLKITDFGLARTTSETEYMTEYVVTRWYRAPELLLNSSEYTSAIDVWSVGCIFAEIMTREPLFPGKDYVHQLKLITELIGSPDGASLEFLRSANARKYVKELPKFPRQNFSARFPSMNSTAIDLLEKMLVFDPVKRITVEEALCYPYLSALHDLNDEPVCSNHFSFHFEDPSSTEEEIKELVWLESVKFNPLPSI</sequence>
<reference key="1">
    <citation type="journal article" date="1993" name="FEBS Lett.">
        <title>ATMPKs: a gene family of plant MAP kinases in Arabidopsis thaliana.</title>
        <authorList>
            <person name="Mizoguchi T."/>
            <person name="Hayashida N."/>
            <person name="Yamaguchi-Shinozaki K."/>
            <person name="Kamada H."/>
            <person name="Shinozaki K."/>
        </authorList>
    </citation>
    <scope>NUCLEOTIDE SEQUENCE [MRNA]</scope>
    <source>
        <strain>cv. Columbia</strain>
    </source>
</reference>
<reference key="2">
    <citation type="journal article" date="1999" name="Nature">
        <title>Sequence and analysis of chromosome 4 of the plant Arabidopsis thaliana.</title>
        <authorList>
            <person name="Mayer K.F.X."/>
            <person name="Schueller C."/>
            <person name="Wambutt R."/>
            <person name="Murphy G."/>
            <person name="Volckaert G."/>
            <person name="Pohl T."/>
            <person name="Duesterhoeft A."/>
            <person name="Stiekema W."/>
            <person name="Entian K.-D."/>
            <person name="Terryn N."/>
            <person name="Harris B."/>
            <person name="Ansorge W."/>
            <person name="Brandt P."/>
            <person name="Grivell L.A."/>
            <person name="Rieger M."/>
            <person name="Weichselgartner M."/>
            <person name="de Simone V."/>
            <person name="Obermaier B."/>
            <person name="Mache R."/>
            <person name="Mueller M."/>
            <person name="Kreis M."/>
            <person name="Delseny M."/>
            <person name="Puigdomenech P."/>
            <person name="Watson M."/>
            <person name="Schmidtheini T."/>
            <person name="Reichert B."/>
            <person name="Portetelle D."/>
            <person name="Perez-Alonso M."/>
            <person name="Boutry M."/>
            <person name="Bancroft I."/>
            <person name="Vos P."/>
            <person name="Hoheisel J."/>
            <person name="Zimmermann W."/>
            <person name="Wedler H."/>
            <person name="Ridley P."/>
            <person name="Langham S.-A."/>
            <person name="McCullagh B."/>
            <person name="Bilham L."/>
            <person name="Robben J."/>
            <person name="van der Schueren J."/>
            <person name="Grymonprez B."/>
            <person name="Chuang Y.-J."/>
            <person name="Vandenbussche F."/>
            <person name="Braeken M."/>
            <person name="Weltjens I."/>
            <person name="Voet M."/>
            <person name="Bastiaens I."/>
            <person name="Aert R."/>
            <person name="Defoor E."/>
            <person name="Weitzenegger T."/>
            <person name="Bothe G."/>
            <person name="Ramsperger U."/>
            <person name="Hilbert H."/>
            <person name="Braun M."/>
            <person name="Holzer E."/>
            <person name="Brandt A."/>
            <person name="Peters S."/>
            <person name="van Staveren M."/>
            <person name="Dirkse W."/>
            <person name="Mooijman P."/>
            <person name="Klein Lankhorst R."/>
            <person name="Rose M."/>
            <person name="Hauf J."/>
            <person name="Koetter P."/>
            <person name="Berneiser S."/>
            <person name="Hempel S."/>
            <person name="Feldpausch M."/>
            <person name="Lamberth S."/>
            <person name="Van den Daele H."/>
            <person name="De Keyser A."/>
            <person name="Buysshaert C."/>
            <person name="Gielen J."/>
            <person name="Villarroel R."/>
            <person name="De Clercq R."/>
            <person name="van Montagu M."/>
            <person name="Rogers J."/>
            <person name="Cronin A."/>
            <person name="Quail M.A."/>
            <person name="Bray-Allen S."/>
            <person name="Clark L."/>
            <person name="Doggett J."/>
            <person name="Hall S."/>
            <person name="Kay M."/>
            <person name="Lennard N."/>
            <person name="McLay K."/>
            <person name="Mayes R."/>
            <person name="Pettett A."/>
            <person name="Rajandream M.A."/>
            <person name="Lyne M."/>
            <person name="Benes V."/>
            <person name="Rechmann S."/>
            <person name="Borkova D."/>
            <person name="Bloecker H."/>
            <person name="Scharfe M."/>
            <person name="Grimm M."/>
            <person name="Loehnert T.-H."/>
            <person name="Dose S."/>
            <person name="de Haan M."/>
            <person name="Maarse A.C."/>
            <person name="Schaefer M."/>
            <person name="Mueller-Auer S."/>
            <person name="Gabel C."/>
            <person name="Fuchs M."/>
            <person name="Fartmann B."/>
            <person name="Granderath K."/>
            <person name="Dauner D."/>
            <person name="Herzl A."/>
            <person name="Neumann S."/>
            <person name="Argiriou A."/>
            <person name="Vitale D."/>
            <person name="Liguori R."/>
            <person name="Piravandi E."/>
            <person name="Massenet O."/>
            <person name="Quigley F."/>
            <person name="Clabauld G."/>
            <person name="Muendlein A."/>
            <person name="Felber R."/>
            <person name="Schnabl S."/>
            <person name="Hiller R."/>
            <person name="Schmidt W."/>
            <person name="Lecharny A."/>
            <person name="Aubourg S."/>
            <person name="Chefdor F."/>
            <person name="Cooke R."/>
            <person name="Berger C."/>
            <person name="Monfort A."/>
            <person name="Casacuberta E."/>
            <person name="Gibbons T."/>
            <person name="Weber N."/>
            <person name="Vandenbol M."/>
            <person name="Bargues M."/>
            <person name="Terol J."/>
            <person name="Torres A."/>
            <person name="Perez-Perez A."/>
            <person name="Purnelle B."/>
            <person name="Bent E."/>
            <person name="Johnson S."/>
            <person name="Tacon D."/>
            <person name="Jesse T."/>
            <person name="Heijnen L."/>
            <person name="Schwarz S."/>
            <person name="Scholler P."/>
            <person name="Heber S."/>
            <person name="Francs P."/>
            <person name="Bielke C."/>
            <person name="Frishman D."/>
            <person name="Haase D."/>
            <person name="Lemcke K."/>
            <person name="Mewes H.-W."/>
            <person name="Stocker S."/>
            <person name="Zaccaria P."/>
            <person name="Bevan M."/>
            <person name="Wilson R.K."/>
            <person name="de la Bastide M."/>
            <person name="Habermann K."/>
            <person name="Parnell L."/>
            <person name="Dedhia N."/>
            <person name="Gnoj L."/>
            <person name="Schutz K."/>
            <person name="Huang E."/>
            <person name="Spiegel L."/>
            <person name="Sekhon M."/>
            <person name="Murray J."/>
            <person name="Sheet P."/>
            <person name="Cordes M."/>
            <person name="Abu-Threideh J."/>
            <person name="Stoneking T."/>
            <person name="Kalicki J."/>
            <person name="Graves T."/>
            <person name="Harmon G."/>
            <person name="Edwards J."/>
            <person name="Latreille P."/>
            <person name="Courtney L."/>
            <person name="Cloud J."/>
            <person name="Abbott A."/>
            <person name="Scott K."/>
            <person name="Johnson D."/>
            <person name="Minx P."/>
            <person name="Bentley D."/>
            <person name="Fulton B."/>
            <person name="Miller N."/>
            <person name="Greco T."/>
            <person name="Kemp K."/>
            <person name="Kramer J."/>
            <person name="Fulton L."/>
            <person name="Mardis E."/>
            <person name="Dante M."/>
            <person name="Pepin K."/>
            <person name="Hillier L.W."/>
            <person name="Nelson J."/>
            <person name="Spieth J."/>
            <person name="Ryan E."/>
            <person name="Andrews S."/>
            <person name="Geisel C."/>
            <person name="Layman D."/>
            <person name="Du H."/>
            <person name="Ali J."/>
            <person name="Berghoff A."/>
            <person name="Jones K."/>
            <person name="Drone K."/>
            <person name="Cotton M."/>
            <person name="Joshu C."/>
            <person name="Antonoiu B."/>
            <person name="Zidanic M."/>
            <person name="Strong C."/>
            <person name="Sun H."/>
            <person name="Lamar B."/>
            <person name="Yordan C."/>
            <person name="Ma P."/>
            <person name="Zhong J."/>
            <person name="Preston R."/>
            <person name="Vil D."/>
            <person name="Shekher M."/>
            <person name="Matero A."/>
            <person name="Shah R."/>
            <person name="Swaby I.K."/>
            <person name="O'Shaughnessy A."/>
            <person name="Rodriguez M."/>
            <person name="Hoffman J."/>
            <person name="Till S."/>
            <person name="Granat S."/>
            <person name="Shohdy N."/>
            <person name="Hasegawa A."/>
            <person name="Hameed A."/>
            <person name="Lodhi M."/>
            <person name="Johnson A."/>
            <person name="Chen E."/>
            <person name="Marra M.A."/>
            <person name="Martienssen R."/>
            <person name="McCombie W.R."/>
        </authorList>
    </citation>
    <scope>NUCLEOTIDE SEQUENCE [LARGE SCALE GENOMIC DNA]</scope>
    <source>
        <strain>cv. Columbia</strain>
    </source>
</reference>
<reference key="3">
    <citation type="journal article" date="2017" name="Plant J.">
        <title>Araport11: a complete reannotation of the Arabidopsis thaliana reference genome.</title>
        <authorList>
            <person name="Cheng C.Y."/>
            <person name="Krishnakumar V."/>
            <person name="Chan A.P."/>
            <person name="Thibaud-Nissen F."/>
            <person name="Schobel S."/>
            <person name="Town C.D."/>
        </authorList>
    </citation>
    <scope>GENOME REANNOTATION</scope>
    <source>
        <strain>cv. Columbia</strain>
    </source>
</reference>
<reference key="4">
    <citation type="submission" date="2004-09" db="EMBL/GenBank/DDBJ databases">
        <title>Large-scale analysis of RIKEN Arabidopsis full-length (RAFL) cDNAs.</title>
        <authorList>
            <person name="Totoki Y."/>
            <person name="Seki M."/>
            <person name="Ishida J."/>
            <person name="Nakajima M."/>
            <person name="Enju A."/>
            <person name="Kamiya A."/>
            <person name="Narusaka M."/>
            <person name="Shin-i T."/>
            <person name="Nakagawa M."/>
            <person name="Sakamoto N."/>
            <person name="Oishi K."/>
            <person name="Kohara Y."/>
            <person name="Kobayashi M."/>
            <person name="Toyoda A."/>
            <person name="Sakaki Y."/>
            <person name="Sakurai T."/>
            <person name="Iida K."/>
            <person name="Akiyama K."/>
            <person name="Satou M."/>
            <person name="Toyoda T."/>
            <person name="Konagaya A."/>
            <person name="Carninci P."/>
            <person name="Kawai J."/>
            <person name="Hayashizaki Y."/>
            <person name="Shinozaki K."/>
        </authorList>
    </citation>
    <scope>NUCLEOTIDE SEQUENCE [LARGE SCALE MRNA]</scope>
    <source>
        <strain>cv. Columbia</strain>
    </source>
</reference>
<reference key="5">
    <citation type="journal article" date="2002" name="Trends Plant Sci.">
        <title>Mitogen-activated protein kinase cascades in plants: a new nomenclature.</title>
        <authorList>
            <consortium name="MAPK group"/>
        </authorList>
    </citation>
    <scope>GENE FAMILY</scope>
    <scope>NOMENCLATURE</scope>
</reference>
<reference key="6">
    <citation type="journal article" date="2005" name="EMBO J.">
        <title>The MAP kinase substrate MKS1 is a regulator of plant defense responses.</title>
        <authorList>
            <person name="Andreasson E."/>
            <person name="Jenkins T."/>
            <person name="Brodersen P."/>
            <person name="Thorgrimsen S."/>
            <person name="Petersen N.H.T."/>
            <person name="Zhu S."/>
            <person name="Qiu J.-L."/>
            <person name="Micheelsen P."/>
            <person name="Rocher A."/>
            <person name="Petersen M."/>
            <person name="Newman M.-A."/>
            <person name="Bjoern Nielsen H."/>
            <person name="Hirt H."/>
            <person name="Somssich I.E."/>
            <person name="Mattsson O."/>
            <person name="Mundy J."/>
        </authorList>
    </citation>
    <scope>ACTIVITY REGULATION</scope>
</reference>
<reference key="7">
    <citation type="journal article" date="2006" name="Trends Plant Sci.">
        <title>Ancient signals: comparative genomics of plant MAPK and MAPKK gene families.</title>
        <authorList>
            <person name="Hamel L.P."/>
            <person name="Nicole M.C."/>
            <person name="Sritubtim S."/>
            <person name="Morency M.J."/>
            <person name="Ellis M."/>
            <person name="Ehlting J."/>
            <person name="Beaudoin N."/>
            <person name="Barbazuk B."/>
            <person name="Klessig D."/>
            <person name="Lee J."/>
            <person name="Martin G."/>
            <person name="Mundy J."/>
            <person name="Ohashi Y."/>
            <person name="Scheel D."/>
            <person name="Sheen J."/>
            <person name="Xing T."/>
            <person name="Zhang S."/>
            <person name="Seguin A."/>
            <person name="Ellis B.E."/>
        </authorList>
    </citation>
    <scope>GENE FAMILY</scope>
</reference>
<reference key="8">
    <citation type="journal article" date="2010" name="Plant Cell">
        <title>The MAP kinase MPK4 is required for cytokinesis in Arabidopsis thaliana.</title>
        <authorList>
            <person name="Kosetsu K."/>
            <person name="Matsunaga S."/>
            <person name="Nakagami H."/>
            <person name="Colcombet J."/>
            <person name="Sasabe M."/>
            <person name="Soyano T."/>
            <person name="Takahashi Y."/>
            <person name="Hirt H."/>
            <person name="Machida Y."/>
        </authorList>
    </citation>
    <scope>ACTIVITY REGULATION</scope>
</reference>
<comment type="catalytic activity">
    <reaction>
        <text>L-seryl-[protein] + ATP = O-phospho-L-seryl-[protein] + ADP + H(+)</text>
        <dbReference type="Rhea" id="RHEA:17989"/>
        <dbReference type="Rhea" id="RHEA-COMP:9863"/>
        <dbReference type="Rhea" id="RHEA-COMP:11604"/>
        <dbReference type="ChEBI" id="CHEBI:15378"/>
        <dbReference type="ChEBI" id="CHEBI:29999"/>
        <dbReference type="ChEBI" id="CHEBI:30616"/>
        <dbReference type="ChEBI" id="CHEBI:83421"/>
        <dbReference type="ChEBI" id="CHEBI:456216"/>
        <dbReference type="EC" id="2.7.11.24"/>
    </reaction>
</comment>
<comment type="catalytic activity">
    <reaction>
        <text>L-threonyl-[protein] + ATP = O-phospho-L-threonyl-[protein] + ADP + H(+)</text>
        <dbReference type="Rhea" id="RHEA:46608"/>
        <dbReference type="Rhea" id="RHEA-COMP:11060"/>
        <dbReference type="Rhea" id="RHEA-COMP:11605"/>
        <dbReference type="ChEBI" id="CHEBI:15378"/>
        <dbReference type="ChEBI" id="CHEBI:30013"/>
        <dbReference type="ChEBI" id="CHEBI:30616"/>
        <dbReference type="ChEBI" id="CHEBI:61977"/>
        <dbReference type="ChEBI" id="CHEBI:456216"/>
        <dbReference type="EC" id="2.7.11.24"/>
    </reaction>
</comment>
<comment type="activity regulation">
    <text evidence="1 5 6">Activated by threonine and tyrosine phosphorylation (By similarity). Activated by the MAP kinase kinase MKK2. Activated by the MAP kinase kinase MKK6 in vitro.</text>
</comment>
<comment type="domain">
    <text>The TXY motif contains the threonine and tyrosine residues whose phosphorylation activates the MAP kinases.</text>
</comment>
<comment type="PTM">
    <text evidence="1">Autophosphorylated on threonine and tyrosine residues.</text>
</comment>
<comment type="PTM">
    <text evidence="1">Dually phosphorylated on Thr-201 and Tyr-203, which activates the enzyme.</text>
</comment>
<comment type="similarity">
    <text evidence="7">Belongs to the protein kinase superfamily. CMGC Ser/Thr protein kinase family. MAP kinase subfamily.</text>
</comment>
<comment type="sequence caution" evidence="7">
    <conflict type="erroneous gene model prediction">
        <sequence resource="EMBL-CDS" id="CAB51417"/>
    </conflict>
</comment>
<comment type="sequence caution" evidence="7">
    <conflict type="erroneous gene model prediction">
        <sequence resource="EMBL-CDS" id="CAB81234"/>
    </conflict>
</comment>
<proteinExistence type="evidence at transcript level"/>
<name>MPK5_ARATH</name>
<keyword id="KW-0067">ATP-binding</keyword>
<keyword id="KW-0418">Kinase</keyword>
<keyword id="KW-0547">Nucleotide-binding</keyword>
<keyword id="KW-0597">Phosphoprotein</keyword>
<keyword id="KW-1185">Reference proteome</keyword>
<keyword id="KW-0723">Serine/threonine-protein kinase</keyword>
<keyword id="KW-0808">Transferase</keyword>
<feature type="chain" id="PRO_0000186314" description="Mitogen-activated protein kinase 5">
    <location>
        <begin position="1"/>
        <end position="376"/>
    </location>
</feature>
<feature type="domain" description="Protein kinase" evidence="3">
    <location>
        <begin position="43"/>
        <end position="329"/>
    </location>
</feature>
<feature type="short sequence motif" description="TXY">
    <location>
        <begin position="201"/>
        <end position="203"/>
    </location>
</feature>
<feature type="active site" description="Proton acceptor" evidence="3 4">
    <location>
        <position position="169"/>
    </location>
</feature>
<feature type="binding site" evidence="3">
    <location>
        <begin position="49"/>
        <end position="57"/>
    </location>
    <ligand>
        <name>ATP</name>
        <dbReference type="ChEBI" id="CHEBI:30616"/>
    </ligand>
</feature>
<feature type="binding site" evidence="3">
    <location>
        <position position="72"/>
    </location>
    <ligand>
        <name>ATP</name>
        <dbReference type="ChEBI" id="CHEBI:30616"/>
    </ligand>
</feature>
<feature type="modified residue" description="Phosphothreonine" evidence="2">
    <location>
        <position position="201"/>
    </location>
</feature>
<feature type="modified residue" description="Phosphotyrosine" evidence="2">
    <location>
        <position position="203"/>
    </location>
</feature>
<feature type="modified residue" description="Phosphothreonine" evidence="2">
    <location>
        <position position="206"/>
    </location>
</feature>
<feature type="sequence conflict" description="In Ref. 1; BAA04868." evidence="7" ref="1">
    <original>A</original>
    <variation>P</variation>
    <location>
        <position position="59"/>
    </location>
</feature>
<feature type="sequence conflict" description="In Ref. 1; BAA04868." evidence="7" ref="1">
    <original>AR</original>
    <variation>GG</variation>
    <location>
        <begin position="276"/>
        <end position="277"/>
    </location>
</feature>
<organism>
    <name type="scientific">Arabidopsis thaliana</name>
    <name type="common">Mouse-ear cress</name>
    <dbReference type="NCBI Taxonomy" id="3702"/>
    <lineage>
        <taxon>Eukaryota</taxon>
        <taxon>Viridiplantae</taxon>
        <taxon>Streptophyta</taxon>
        <taxon>Embryophyta</taxon>
        <taxon>Tracheophyta</taxon>
        <taxon>Spermatophyta</taxon>
        <taxon>Magnoliopsida</taxon>
        <taxon>eudicotyledons</taxon>
        <taxon>Gunneridae</taxon>
        <taxon>Pentapetalae</taxon>
        <taxon>rosids</taxon>
        <taxon>malvids</taxon>
        <taxon>Brassicales</taxon>
        <taxon>Brassicaceae</taxon>
        <taxon>Camelineae</taxon>
        <taxon>Arabidopsis</taxon>
    </lineage>
</organism>
<protein>
    <recommendedName>
        <fullName>Mitogen-activated protein kinase 5</fullName>
        <shortName>AtMPK5</shortName>
        <shortName>MAP kinase 5</shortName>
        <ecNumber>2.7.11.24</ecNumber>
    </recommendedName>
</protein>